<feature type="chain" id="PRO_1000008105" description="DNA mismatch repair protein MutS">
    <location>
        <begin position="1"/>
        <end position="872"/>
    </location>
</feature>
<feature type="binding site" evidence="1">
    <location>
        <begin position="602"/>
        <end position="609"/>
    </location>
    <ligand>
        <name>ATP</name>
        <dbReference type="ChEBI" id="CHEBI:30616"/>
    </ligand>
</feature>
<proteinExistence type="inferred from homology"/>
<dbReference type="EMBL" id="AJ938182">
    <property type="protein sequence ID" value="CAI80846.1"/>
    <property type="molecule type" value="Genomic_DNA"/>
</dbReference>
<dbReference type="RefSeq" id="WP_000073333.1">
    <property type="nucleotide sequence ID" value="NC_007622.1"/>
</dbReference>
<dbReference type="SMR" id="Q2YXR9"/>
<dbReference type="KEGG" id="sab:SAB1157"/>
<dbReference type="HOGENOM" id="CLU_002472_4_0_9"/>
<dbReference type="GO" id="GO:0005829">
    <property type="term" value="C:cytosol"/>
    <property type="evidence" value="ECO:0007669"/>
    <property type="project" value="TreeGrafter"/>
</dbReference>
<dbReference type="GO" id="GO:0005524">
    <property type="term" value="F:ATP binding"/>
    <property type="evidence" value="ECO:0007669"/>
    <property type="project" value="UniProtKB-UniRule"/>
</dbReference>
<dbReference type="GO" id="GO:0140664">
    <property type="term" value="F:ATP-dependent DNA damage sensor activity"/>
    <property type="evidence" value="ECO:0007669"/>
    <property type="project" value="InterPro"/>
</dbReference>
<dbReference type="GO" id="GO:0003684">
    <property type="term" value="F:damaged DNA binding"/>
    <property type="evidence" value="ECO:0007669"/>
    <property type="project" value="UniProtKB-UniRule"/>
</dbReference>
<dbReference type="GO" id="GO:0030983">
    <property type="term" value="F:mismatched DNA binding"/>
    <property type="evidence" value="ECO:0007669"/>
    <property type="project" value="InterPro"/>
</dbReference>
<dbReference type="GO" id="GO:0006298">
    <property type="term" value="P:mismatch repair"/>
    <property type="evidence" value="ECO:0007669"/>
    <property type="project" value="UniProtKB-UniRule"/>
</dbReference>
<dbReference type="CDD" id="cd03284">
    <property type="entry name" value="ABC_MutS1"/>
    <property type="match status" value="1"/>
</dbReference>
<dbReference type="FunFam" id="1.10.1420.10:FF:000007">
    <property type="entry name" value="DNA mismatch repair protein MutS"/>
    <property type="match status" value="1"/>
</dbReference>
<dbReference type="FunFam" id="3.40.1170.10:FF:000001">
    <property type="entry name" value="DNA mismatch repair protein MutS"/>
    <property type="match status" value="1"/>
</dbReference>
<dbReference type="FunFam" id="3.40.50.300:FF:000896">
    <property type="entry name" value="DNA mismatch repair protein MutS"/>
    <property type="match status" value="1"/>
</dbReference>
<dbReference type="Gene3D" id="1.10.1420.10">
    <property type="match status" value="2"/>
</dbReference>
<dbReference type="Gene3D" id="3.40.1170.10">
    <property type="entry name" value="DNA repair protein MutS, domain I"/>
    <property type="match status" value="1"/>
</dbReference>
<dbReference type="Gene3D" id="3.30.420.110">
    <property type="entry name" value="MutS, connector domain"/>
    <property type="match status" value="1"/>
</dbReference>
<dbReference type="Gene3D" id="3.40.50.300">
    <property type="entry name" value="P-loop containing nucleotide triphosphate hydrolases"/>
    <property type="match status" value="1"/>
</dbReference>
<dbReference type="HAMAP" id="MF_00096">
    <property type="entry name" value="MutS"/>
    <property type="match status" value="1"/>
</dbReference>
<dbReference type="InterPro" id="IPR005748">
    <property type="entry name" value="DNA_mismatch_repair_MutS"/>
</dbReference>
<dbReference type="InterPro" id="IPR007695">
    <property type="entry name" value="DNA_mismatch_repair_MutS-lik_N"/>
</dbReference>
<dbReference type="InterPro" id="IPR017261">
    <property type="entry name" value="DNA_mismatch_repair_MutS/MSH"/>
</dbReference>
<dbReference type="InterPro" id="IPR000432">
    <property type="entry name" value="DNA_mismatch_repair_MutS_C"/>
</dbReference>
<dbReference type="InterPro" id="IPR007861">
    <property type="entry name" value="DNA_mismatch_repair_MutS_clamp"/>
</dbReference>
<dbReference type="InterPro" id="IPR007696">
    <property type="entry name" value="DNA_mismatch_repair_MutS_core"/>
</dbReference>
<dbReference type="InterPro" id="IPR016151">
    <property type="entry name" value="DNA_mismatch_repair_MutS_N"/>
</dbReference>
<dbReference type="InterPro" id="IPR036187">
    <property type="entry name" value="DNA_mismatch_repair_MutS_sf"/>
</dbReference>
<dbReference type="InterPro" id="IPR007860">
    <property type="entry name" value="DNA_mmatch_repair_MutS_con_dom"/>
</dbReference>
<dbReference type="InterPro" id="IPR045076">
    <property type="entry name" value="MutS"/>
</dbReference>
<dbReference type="InterPro" id="IPR036678">
    <property type="entry name" value="MutS_con_dom_sf"/>
</dbReference>
<dbReference type="InterPro" id="IPR027417">
    <property type="entry name" value="P-loop_NTPase"/>
</dbReference>
<dbReference type="NCBIfam" id="TIGR01070">
    <property type="entry name" value="mutS1"/>
    <property type="match status" value="1"/>
</dbReference>
<dbReference type="NCBIfam" id="NF003810">
    <property type="entry name" value="PRK05399.1"/>
    <property type="match status" value="1"/>
</dbReference>
<dbReference type="PANTHER" id="PTHR11361:SF34">
    <property type="entry name" value="DNA MISMATCH REPAIR PROTEIN MSH1, MITOCHONDRIAL"/>
    <property type="match status" value="1"/>
</dbReference>
<dbReference type="PANTHER" id="PTHR11361">
    <property type="entry name" value="DNA MISMATCH REPAIR PROTEIN MUTS FAMILY MEMBER"/>
    <property type="match status" value="1"/>
</dbReference>
<dbReference type="Pfam" id="PF01624">
    <property type="entry name" value="MutS_I"/>
    <property type="match status" value="1"/>
</dbReference>
<dbReference type="Pfam" id="PF05188">
    <property type="entry name" value="MutS_II"/>
    <property type="match status" value="1"/>
</dbReference>
<dbReference type="Pfam" id="PF05192">
    <property type="entry name" value="MutS_III"/>
    <property type="match status" value="1"/>
</dbReference>
<dbReference type="Pfam" id="PF05190">
    <property type="entry name" value="MutS_IV"/>
    <property type="match status" value="1"/>
</dbReference>
<dbReference type="Pfam" id="PF00488">
    <property type="entry name" value="MutS_V"/>
    <property type="match status" value="1"/>
</dbReference>
<dbReference type="PIRSF" id="PIRSF037677">
    <property type="entry name" value="DNA_mis_repair_Msh6"/>
    <property type="match status" value="1"/>
</dbReference>
<dbReference type="SMART" id="SM00534">
    <property type="entry name" value="MUTSac"/>
    <property type="match status" value="1"/>
</dbReference>
<dbReference type="SMART" id="SM00533">
    <property type="entry name" value="MUTSd"/>
    <property type="match status" value="1"/>
</dbReference>
<dbReference type="SUPFAM" id="SSF55271">
    <property type="entry name" value="DNA repair protein MutS, domain I"/>
    <property type="match status" value="1"/>
</dbReference>
<dbReference type="SUPFAM" id="SSF53150">
    <property type="entry name" value="DNA repair protein MutS, domain II"/>
    <property type="match status" value="1"/>
</dbReference>
<dbReference type="SUPFAM" id="SSF48334">
    <property type="entry name" value="DNA repair protein MutS, domain III"/>
    <property type="match status" value="1"/>
</dbReference>
<dbReference type="SUPFAM" id="SSF52540">
    <property type="entry name" value="P-loop containing nucleoside triphosphate hydrolases"/>
    <property type="match status" value="1"/>
</dbReference>
<dbReference type="PROSITE" id="PS00486">
    <property type="entry name" value="DNA_MISMATCH_REPAIR_2"/>
    <property type="match status" value="1"/>
</dbReference>
<protein>
    <recommendedName>
        <fullName evidence="1">DNA mismatch repair protein MutS</fullName>
    </recommendedName>
</protein>
<name>MUTS_STAAB</name>
<comment type="function">
    <text evidence="1">This protein is involved in the repair of mismatches in DNA. It is possible that it carries out the mismatch recognition step. This protein has a weak ATPase activity.</text>
</comment>
<comment type="similarity">
    <text evidence="1">Belongs to the DNA mismatch repair MutS family.</text>
</comment>
<sequence length="872" mass="99974">MSNVTPMMQQYLKIKSEYQDCLLFFRLGDFYEMFYEDAKEASRVLEITLTKRDAKKENPIPMCGVPYHSADSYIDTLVNNGYKVAICEQMEDPKQTKGMVRREVVRIVTPGTVMEQGGVDDKQNNYILSFVMNQPEIALSYCDVSTGELKVTHFNDEATLLNEITTINPNEVVINDNISDHLKRQINMVTETITVRETLSSEIYSVNQTEHKLMFQATQLLLDYIHHTQKRDLSHIEDVVQYAAIDYMKMDFYAKRNLELTESIRLKSKKGTLLWLMDETKTPMGARRLKQWIDRPLISKEQIEARLDIVDEFSAHFIERDTLRTYLNQVYDIERLVGRVSYGNVNARDLIQLKHSISEIPNIKALLNSMNQDTLVQVNQLEPLDDLLDILEQSLVEEPPISVKDGGLFKVGFNMQLDEYLEASKNGKTWLAELQAKERQRTGIKSLKISFNKVFGYFIEITRANLQNFEPSEFGYMRKQTLSNAERFITDELKEKEDIILGAEDKAIELEYQLFVQLREEVKKYTERLQQQAKIISELDCLQSFAEIAQKYNYTRPSFSENKTLELVESRHPVVERVMDYNDYVPNNCRLDNETFIYLITGPNMSGKSTYMRQVAIISIMAQMGAYVPCKEAVLPIFDQIFTRIGAADDLVSGKSTFMVEMLEAQKALTYATEDSLIIFDEIGRGTSTYDGLALAQAMIEYVAETSHAKTLFSTHYHELTTLDQALPSLKNVHVAANEYKGELIFLHKVKDGAVDDSYGIQVAKLADLPEKVISRAQVILSEFEASADKKSSISNLKMVENEPEINQENSNLSVEETTDTLSQKDFEQASFDLFENDQESEIELQIKNLNLSNMTPIEALVKLSELQNQLK</sequence>
<keyword id="KW-0067">ATP-binding</keyword>
<keyword id="KW-0227">DNA damage</keyword>
<keyword id="KW-0234">DNA repair</keyword>
<keyword id="KW-0238">DNA-binding</keyword>
<keyword id="KW-0547">Nucleotide-binding</keyword>
<gene>
    <name evidence="1" type="primary">mutS</name>
    <name type="ordered locus">SAB1157</name>
</gene>
<accession>Q2YXR9</accession>
<organism>
    <name type="scientific">Staphylococcus aureus (strain bovine RF122 / ET3-1)</name>
    <dbReference type="NCBI Taxonomy" id="273036"/>
    <lineage>
        <taxon>Bacteria</taxon>
        <taxon>Bacillati</taxon>
        <taxon>Bacillota</taxon>
        <taxon>Bacilli</taxon>
        <taxon>Bacillales</taxon>
        <taxon>Staphylococcaceae</taxon>
        <taxon>Staphylococcus</taxon>
    </lineage>
</organism>
<reference key="1">
    <citation type="journal article" date="2007" name="PLoS ONE">
        <title>Molecular correlates of host specialization in Staphylococcus aureus.</title>
        <authorList>
            <person name="Herron-Olson L."/>
            <person name="Fitzgerald J.R."/>
            <person name="Musser J.M."/>
            <person name="Kapur V."/>
        </authorList>
    </citation>
    <scope>NUCLEOTIDE SEQUENCE [LARGE SCALE GENOMIC DNA]</scope>
    <source>
        <strain>bovine RF122 / ET3-1</strain>
    </source>
</reference>
<evidence type="ECO:0000255" key="1">
    <source>
        <dbReference type="HAMAP-Rule" id="MF_00096"/>
    </source>
</evidence>